<reference key="1">
    <citation type="submission" date="2008-10" db="EMBL/GenBank/DDBJ databases">
        <title>Genome sequence of Bacillus cereus G9842.</title>
        <authorList>
            <person name="Dodson R.J."/>
            <person name="Durkin A.S."/>
            <person name="Rosovitz M.J."/>
            <person name="Rasko D.A."/>
            <person name="Hoffmaster A."/>
            <person name="Ravel J."/>
            <person name="Sutton G."/>
        </authorList>
    </citation>
    <scope>NUCLEOTIDE SEQUENCE [LARGE SCALE GENOMIC DNA]</scope>
    <source>
        <strain>G9842</strain>
    </source>
</reference>
<name>TRPB_BACC2</name>
<proteinExistence type="inferred from homology"/>
<keyword id="KW-0028">Amino-acid biosynthesis</keyword>
<keyword id="KW-0057">Aromatic amino acid biosynthesis</keyword>
<keyword id="KW-0456">Lyase</keyword>
<keyword id="KW-0663">Pyridoxal phosphate</keyword>
<keyword id="KW-0822">Tryptophan biosynthesis</keyword>
<dbReference type="EC" id="4.2.1.20" evidence="1"/>
<dbReference type="EMBL" id="CP001186">
    <property type="protein sequence ID" value="ACK95368.1"/>
    <property type="molecule type" value="Genomic_DNA"/>
</dbReference>
<dbReference type="RefSeq" id="WP_001105025.1">
    <property type="nucleotide sequence ID" value="NC_011772.1"/>
</dbReference>
<dbReference type="SMR" id="B7IM76"/>
<dbReference type="KEGG" id="bcg:BCG9842_B4048"/>
<dbReference type="HOGENOM" id="CLU_016734_3_1_9"/>
<dbReference type="UniPathway" id="UPA00035">
    <property type="reaction ID" value="UER00044"/>
</dbReference>
<dbReference type="Proteomes" id="UP000006744">
    <property type="component" value="Chromosome"/>
</dbReference>
<dbReference type="GO" id="GO:0005737">
    <property type="term" value="C:cytoplasm"/>
    <property type="evidence" value="ECO:0007669"/>
    <property type="project" value="TreeGrafter"/>
</dbReference>
<dbReference type="GO" id="GO:0004834">
    <property type="term" value="F:tryptophan synthase activity"/>
    <property type="evidence" value="ECO:0007669"/>
    <property type="project" value="UniProtKB-UniRule"/>
</dbReference>
<dbReference type="CDD" id="cd06446">
    <property type="entry name" value="Trp-synth_B"/>
    <property type="match status" value="1"/>
</dbReference>
<dbReference type="FunFam" id="3.40.50.1100:FF:000001">
    <property type="entry name" value="Tryptophan synthase beta chain"/>
    <property type="match status" value="1"/>
</dbReference>
<dbReference type="FunFam" id="3.40.50.1100:FF:000004">
    <property type="entry name" value="Tryptophan synthase beta chain"/>
    <property type="match status" value="1"/>
</dbReference>
<dbReference type="Gene3D" id="3.40.50.1100">
    <property type="match status" value="2"/>
</dbReference>
<dbReference type="HAMAP" id="MF_00133">
    <property type="entry name" value="Trp_synth_beta"/>
    <property type="match status" value="1"/>
</dbReference>
<dbReference type="InterPro" id="IPR006653">
    <property type="entry name" value="Trp_synth_b_CS"/>
</dbReference>
<dbReference type="InterPro" id="IPR006654">
    <property type="entry name" value="Trp_synth_beta"/>
</dbReference>
<dbReference type="InterPro" id="IPR023026">
    <property type="entry name" value="Trp_synth_beta/beta-like"/>
</dbReference>
<dbReference type="InterPro" id="IPR001926">
    <property type="entry name" value="TrpB-like_PALP"/>
</dbReference>
<dbReference type="InterPro" id="IPR036052">
    <property type="entry name" value="TrpB-like_PALP_sf"/>
</dbReference>
<dbReference type="NCBIfam" id="TIGR00263">
    <property type="entry name" value="trpB"/>
    <property type="match status" value="1"/>
</dbReference>
<dbReference type="PANTHER" id="PTHR48077:SF3">
    <property type="entry name" value="TRYPTOPHAN SYNTHASE"/>
    <property type="match status" value="1"/>
</dbReference>
<dbReference type="PANTHER" id="PTHR48077">
    <property type="entry name" value="TRYPTOPHAN SYNTHASE-RELATED"/>
    <property type="match status" value="1"/>
</dbReference>
<dbReference type="Pfam" id="PF00291">
    <property type="entry name" value="PALP"/>
    <property type="match status" value="1"/>
</dbReference>
<dbReference type="PIRSF" id="PIRSF001413">
    <property type="entry name" value="Trp_syn_beta"/>
    <property type="match status" value="1"/>
</dbReference>
<dbReference type="SUPFAM" id="SSF53686">
    <property type="entry name" value="Tryptophan synthase beta subunit-like PLP-dependent enzymes"/>
    <property type="match status" value="1"/>
</dbReference>
<dbReference type="PROSITE" id="PS00168">
    <property type="entry name" value="TRP_SYNTHASE_BETA"/>
    <property type="match status" value="1"/>
</dbReference>
<protein>
    <recommendedName>
        <fullName evidence="1">Tryptophan synthase beta chain</fullName>
        <ecNumber evidence="1">4.2.1.20</ecNumber>
    </recommendedName>
</protein>
<organism>
    <name type="scientific">Bacillus cereus (strain G9842)</name>
    <dbReference type="NCBI Taxonomy" id="405531"/>
    <lineage>
        <taxon>Bacteria</taxon>
        <taxon>Bacillati</taxon>
        <taxon>Bacillota</taxon>
        <taxon>Bacilli</taxon>
        <taxon>Bacillales</taxon>
        <taxon>Bacillaceae</taxon>
        <taxon>Bacillus</taxon>
        <taxon>Bacillus cereus group</taxon>
    </lineage>
</organism>
<feature type="chain" id="PRO_1000117749" description="Tryptophan synthase beta chain">
    <location>
        <begin position="1"/>
        <end position="397"/>
    </location>
</feature>
<feature type="modified residue" description="N6-(pyridoxal phosphate)lysine" evidence="1">
    <location>
        <position position="91"/>
    </location>
</feature>
<accession>B7IM76</accession>
<comment type="function">
    <text evidence="1">The beta subunit is responsible for the synthesis of L-tryptophan from indole and L-serine.</text>
</comment>
<comment type="catalytic activity">
    <reaction evidence="1">
        <text>(1S,2R)-1-C-(indol-3-yl)glycerol 3-phosphate + L-serine = D-glyceraldehyde 3-phosphate + L-tryptophan + H2O</text>
        <dbReference type="Rhea" id="RHEA:10532"/>
        <dbReference type="ChEBI" id="CHEBI:15377"/>
        <dbReference type="ChEBI" id="CHEBI:33384"/>
        <dbReference type="ChEBI" id="CHEBI:57912"/>
        <dbReference type="ChEBI" id="CHEBI:58866"/>
        <dbReference type="ChEBI" id="CHEBI:59776"/>
        <dbReference type="EC" id="4.2.1.20"/>
    </reaction>
</comment>
<comment type="cofactor">
    <cofactor evidence="1">
        <name>pyridoxal 5'-phosphate</name>
        <dbReference type="ChEBI" id="CHEBI:597326"/>
    </cofactor>
</comment>
<comment type="pathway">
    <text evidence="1">Amino-acid biosynthesis; L-tryptophan biosynthesis; L-tryptophan from chorismate: step 5/5.</text>
</comment>
<comment type="subunit">
    <text evidence="1">Tetramer of two alpha and two beta chains.</text>
</comment>
<comment type="similarity">
    <text evidence="1">Belongs to the TrpB family.</text>
</comment>
<gene>
    <name evidence="1" type="primary">trpB</name>
    <name type="ordered locus">BCG9842_B4048</name>
</gene>
<evidence type="ECO:0000255" key="1">
    <source>
        <dbReference type="HAMAP-Rule" id="MF_00133"/>
    </source>
</evidence>
<sequence>MNYAYPDEKGHYGIYGGRYVPETLMQSVLELEEAYKEAMQDEAFQKELNHYLKTYVGRETPLYFAENMTKYCGGAKIYLKREDLNHTGAHKINNTIGQALLAVRMGKKKVVAETGAGQHGVATATVCALLGLECVIFMGEEDVRRQKLNVFRMELLGAKVESVAAGSGTLKDAVNEALRYWVSHVHDTHYIMGSVLGPHPFPQIVRDFQSVIGNETKKQYEALEGKLPEAVVACIGGGSNAMGMFYPFVHDEEVALYGVEAAGKGVHTEKHAATLTKGSVGVLHGSMMYLLQNEEGQIQEAHSISAGLDYPGVGPEHSLLKDIGRVSYHSITDDEALEAFQLLTKKEGIIPALESSHAVAYALKLAPKMKKDEGLVICLSGRGDKDVESIKRYMEEV</sequence>